<protein>
    <recommendedName>
        <fullName evidence="1">Phosphoglucosamine mutase</fullName>
        <ecNumber evidence="1">5.4.2.10</ecNumber>
    </recommendedName>
</protein>
<sequence>MGTLFGTDGIRGVANRYPMDAPMAFAVGQAVTYVLKKEKHRTRIIIGKDTRISGYMLESALLAGITSMGGNPYLVGVLPTPGIAFITESMRADAGIVISASHNPYQDNGIKIFGGNGFKLSDEQEEVIENLVLDGKLADKVPPVDRMGQAHRIDDVLGRYIVFLKNTFPRELSMEGMKIVMDTANGATYRVAPESFTELGADLDVIHNAPNGININAACGSQHTEDLRKRVVEKGAAIGLAFDGDGDRLIAVDEQGREITGDQILIICGKMLKGKGRLKNDLLVSTVMSNLGLTVACKKYGFRQHAAKVGDRYVLEDMQRLGSVLGGEESGHVIFLDHHTTGDGILTAIQLIAAMLESGKPLSELARLMDVFPQKLINIDVKSKPDISTLPQVVQAVKDVESALGDQGRVLVRYSGTQNMCRVMVEGPSDEITLKYCRQIADVVKAAIG</sequence>
<dbReference type="EC" id="5.4.2.10" evidence="1"/>
<dbReference type="EMBL" id="CP000478">
    <property type="protein sequence ID" value="ABK18590.1"/>
    <property type="molecule type" value="Genomic_DNA"/>
</dbReference>
<dbReference type="RefSeq" id="WP_011699754.1">
    <property type="nucleotide sequence ID" value="NC_008554.1"/>
</dbReference>
<dbReference type="SMR" id="A0LMD8"/>
<dbReference type="FunCoup" id="A0LMD8">
    <property type="interactions" value="440"/>
</dbReference>
<dbReference type="STRING" id="335543.Sfum_2913"/>
<dbReference type="KEGG" id="sfu:Sfum_2913"/>
<dbReference type="eggNOG" id="COG1109">
    <property type="taxonomic scope" value="Bacteria"/>
</dbReference>
<dbReference type="HOGENOM" id="CLU_016950_7_0_7"/>
<dbReference type="InParanoid" id="A0LMD8"/>
<dbReference type="OrthoDB" id="9806956at2"/>
<dbReference type="Proteomes" id="UP000001784">
    <property type="component" value="Chromosome"/>
</dbReference>
<dbReference type="GO" id="GO:0005829">
    <property type="term" value="C:cytosol"/>
    <property type="evidence" value="ECO:0007669"/>
    <property type="project" value="TreeGrafter"/>
</dbReference>
<dbReference type="GO" id="GO:0000287">
    <property type="term" value="F:magnesium ion binding"/>
    <property type="evidence" value="ECO:0007669"/>
    <property type="project" value="UniProtKB-UniRule"/>
</dbReference>
<dbReference type="GO" id="GO:0008966">
    <property type="term" value="F:phosphoglucosamine mutase activity"/>
    <property type="evidence" value="ECO:0007669"/>
    <property type="project" value="UniProtKB-UniRule"/>
</dbReference>
<dbReference type="GO" id="GO:0004615">
    <property type="term" value="F:phosphomannomutase activity"/>
    <property type="evidence" value="ECO:0007669"/>
    <property type="project" value="TreeGrafter"/>
</dbReference>
<dbReference type="GO" id="GO:0005975">
    <property type="term" value="P:carbohydrate metabolic process"/>
    <property type="evidence" value="ECO:0007669"/>
    <property type="project" value="InterPro"/>
</dbReference>
<dbReference type="GO" id="GO:0009252">
    <property type="term" value="P:peptidoglycan biosynthetic process"/>
    <property type="evidence" value="ECO:0007669"/>
    <property type="project" value="TreeGrafter"/>
</dbReference>
<dbReference type="GO" id="GO:0006048">
    <property type="term" value="P:UDP-N-acetylglucosamine biosynthetic process"/>
    <property type="evidence" value="ECO:0007669"/>
    <property type="project" value="TreeGrafter"/>
</dbReference>
<dbReference type="CDD" id="cd05802">
    <property type="entry name" value="GlmM"/>
    <property type="match status" value="1"/>
</dbReference>
<dbReference type="FunFam" id="3.30.310.50:FF:000001">
    <property type="entry name" value="Phosphoglucosamine mutase"/>
    <property type="match status" value="1"/>
</dbReference>
<dbReference type="FunFam" id="3.40.120.10:FF:000001">
    <property type="entry name" value="Phosphoglucosamine mutase"/>
    <property type="match status" value="1"/>
</dbReference>
<dbReference type="FunFam" id="3.40.120.10:FF:000003">
    <property type="entry name" value="Phosphoglucosamine mutase"/>
    <property type="match status" value="1"/>
</dbReference>
<dbReference type="Gene3D" id="3.40.120.10">
    <property type="entry name" value="Alpha-D-Glucose-1,6-Bisphosphate, subunit A, domain 3"/>
    <property type="match status" value="3"/>
</dbReference>
<dbReference type="Gene3D" id="3.30.310.50">
    <property type="entry name" value="Alpha-D-phosphohexomutase, C-terminal domain"/>
    <property type="match status" value="1"/>
</dbReference>
<dbReference type="HAMAP" id="MF_01554_B">
    <property type="entry name" value="GlmM_B"/>
    <property type="match status" value="1"/>
</dbReference>
<dbReference type="InterPro" id="IPR005844">
    <property type="entry name" value="A-D-PHexomutase_a/b/a-I"/>
</dbReference>
<dbReference type="InterPro" id="IPR016055">
    <property type="entry name" value="A-D-PHexomutase_a/b/a-I/II/III"/>
</dbReference>
<dbReference type="InterPro" id="IPR005845">
    <property type="entry name" value="A-D-PHexomutase_a/b/a-II"/>
</dbReference>
<dbReference type="InterPro" id="IPR005846">
    <property type="entry name" value="A-D-PHexomutase_a/b/a-III"/>
</dbReference>
<dbReference type="InterPro" id="IPR005843">
    <property type="entry name" value="A-D-PHexomutase_C"/>
</dbReference>
<dbReference type="InterPro" id="IPR036900">
    <property type="entry name" value="A-D-PHexomutase_C_sf"/>
</dbReference>
<dbReference type="InterPro" id="IPR016066">
    <property type="entry name" value="A-D-PHexomutase_CS"/>
</dbReference>
<dbReference type="InterPro" id="IPR005841">
    <property type="entry name" value="Alpha-D-phosphohexomutase_SF"/>
</dbReference>
<dbReference type="InterPro" id="IPR006352">
    <property type="entry name" value="GlmM_bact"/>
</dbReference>
<dbReference type="InterPro" id="IPR050060">
    <property type="entry name" value="Phosphoglucosamine_mutase"/>
</dbReference>
<dbReference type="NCBIfam" id="TIGR01455">
    <property type="entry name" value="glmM"/>
    <property type="match status" value="1"/>
</dbReference>
<dbReference type="NCBIfam" id="NF008139">
    <property type="entry name" value="PRK10887.1"/>
    <property type="match status" value="1"/>
</dbReference>
<dbReference type="PANTHER" id="PTHR42946:SF1">
    <property type="entry name" value="PHOSPHOGLUCOMUTASE (ALPHA-D-GLUCOSE-1,6-BISPHOSPHATE-DEPENDENT)"/>
    <property type="match status" value="1"/>
</dbReference>
<dbReference type="PANTHER" id="PTHR42946">
    <property type="entry name" value="PHOSPHOHEXOSE MUTASE"/>
    <property type="match status" value="1"/>
</dbReference>
<dbReference type="Pfam" id="PF02878">
    <property type="entry name" value="PGM_PMM_I"/>
    <property type="match status" value="1"/>
</dbReference>
<dbReference type="Pfam" id="PF02879">
    <property type="entry name" value="PGM_PMM_II"/>
    <property type="match status" value="1"/>
</dbReference>
<dbReference type="Pfam" id="PF02880">
    <property type="entry name" value="PGM_PMM_III"/>
    <property type="match status" value="1"/>
</dbReference>
<dbReference type="Pfam" id="PF00408">
    <property type="entry name" value="PGM_PMM_IV"/>
    <property type="match status" value="1"/>
</dbReference>
<dbReference type="PRINTS" id="PR00509">
    <property type="entry name" value="PGMPMM"/>
</dbReference>
<dbReference type="SUPFAM" id="SSF55957">
    <property type="entry name" value="Phosphoglucomutase, C-terminal domain"/>
    <property type="match status" value="1"/>
</dbReference>
<dbReference type="SUPFAM" id="SSF53738">
    <property type="entry name" value="Phosphoglucomutase, first 3 domains"/>
    <property type="match status" value="3"/>
</dbReference>
<dbReference type="PROSITE" id="PS00710">
    <property type="entry name" value="PGM_PMM"/>
    <property type="match status" value="1"/>
</dbReference>
<feature type="chain" id="PRO_0000301396" description="Phosphoglucosamine mutase">
    <location>
        <begin position="1"/>
        <end position="449"/>
    </location>
</feature>
<feature type="active site" description="Phosphoserine intermediate" evidence="1">
    <location>
        <position position="101"/>
    </location>
</feature>
<feature type="binding site" description="via phosphate group" evidence="1">
    <location>
        <position position="101"/>
    </location>
    <ligand>
        <name>Mg(2+)</name>
        <dbReference type="ChEBI" id="CHEBI:18420"/>
    </ligand>
</feature>
<feature type="binding site" evidence="1">
    <location>
        <position position="243"/>
    </location>
    <ligand>
        <name>Mg(2+)</name>
        <dbReference type="ChEBI" id="CHEBI:18420"/>
    </ligand>
</feature>
<feature type="binding site" evidence="1">
    <location>
        <position position="245"/>
    </location>
    <ligand>
        <name>Mg(2+)</name>
        <dbReference type="ChEBI" id="CHEBI:18420"/>
    </ligand>
</feature>
<feature type="binding site" evidence="1">
    <location>
        <position position="247"/>
    </location>
    <ligand>
        <name>Mg(2+)</name>
        <dbReference type="ChEBI" id="CHEBI:18420"/>
    </ligand>
</feature>
<feature type="modified residue" description="Phosphoserine" evidence="1">
    <location>
        <position position="101"/>
    </location>
</feature>
<accession>A0LMD8</accession>
<comment type="function">
    <text evidence="1">Catalyzes the conversion of glucosamine-6-phosphate to glucosamine-1-phosphate.</text>
</comment>
<comment type="catalytic activity">
    <reaction evidence="1">
        <text>alpha-D-glucosamine 1-phosphate = D-glucosamine 6-phosphate</text>
        <dbReference type="Rhea" id="RHEA:23424"/>
        <dbReference type="ChEBI" id="CHEBI:58516"/>
        <dbReference type="ChEBI" id="CHEBI:58725"/>
        <dbReference type="EC" id="5.4.2.10"/>
    </reaction>
</comment>
<comment type="cofactor">
    <cofactor evidence="1">
        <name>Mg(2+)</name>
        <dbReference type="ChEBI" id="CHEBI:18420"/>
    </cofactor>
    <text evidence="1">Binds 1 Mg(2+) ion per subunit.</text>
</comment>
<comment type="PTM">
    <text evidence="1">Activated by phosphorylation.</text>
</comment>
<comment type="similarity">
    <text evidence="1">Belongs to the phosphohexose mutase family.</text>
</comment>
<name>GLMM_SYNFM</name>
<reference key="1">
    <citation type="submission" date="2006-10" db="EMBL/GenBank/DDBJ databases">
        <title>Complete sequence of Syntrophobacter fumaroxidans MPOB.</title>
        <authorList>
            <consortium name="US DOE Joint Genome Institute"/>
            <person name="Copeland A."/>
            <person name="Lucas S."/>
            <person name="Lapidus A."/>
            <person name="Barry K."/>
            <person name="Detter J.C."/>
            <person name="Glavina del Rio T."/>
            <person name="Hammon N."/>
            <person name="Israni S."/>
            <person name="Pitluck S."/>
            <person name="Goltsman E.G."/>
            <person name="Martinez M."/>
            <person name="Schmutz J."/>
            <person name="Larimer F."/>
            <person name="Land M."/>
            <person name="Hauser L."/>
            <person name="Kyrpides N."/>
            <person name="Kim E."/>
            <person name="Boone D.R."/>
            <person name="Brockman F."/>
            <person name="Culley D."/>
            <person name="Ferry J."/>
            <person name="Gunsalus R."/>
            <person name="McInerney M.J."/>
            <person name="Morrison M."/>
            <person name="Plugge C."/>
            <person name="Rohlin L."/>
            <person name="Scholten J."/>
            <person name="Sieber J."/>
            <person name="Stams A.J.M."/>
            <person name="Worm P."/>
            <person name="Henstra A.M."/>
            <person name="Richardson P."/>
        </authorList>
    </citation>
    <scope>NUCLEOTIDE SEQUENCE [LARGE SCALE GENOMIC DNA]</scope>
    <source>
        <strain>DSM 10017 / MPOB</strain>
    </source>
</reference>
<evidence type="ECO:0000255" key="1">
    <source>
        <dbReference type="HAMAP-Rule" id="MF_01554"/>
    </source>
</evidence>
<organism>
    <name type="scientific">Syntrophobacter fumaroxidans (strain DSM 10017 / MPOB)</name>
    <dbReference type="NCBI Taxonomy" id="335543"/>
    <lineage>
        <taxon>Bacteria</taxon>
        <taxon>Pseudomonadati</taxon>
        <taxon>Thermodesulfobacteriota</taxon>
        <taxon>Syntrophobacteria</taxon>
        <taxon>Syntrophobacterales</taxon>
        <taxon>Syntrophobacteraceae</taxon>
        <taxon>Syntrophobacter</taxon>
    </lineage>
</organism>
<proteinExistence type="inferred from homology"/>
<gene>
    <name evidence="1" type="primary">glmM</name>
    <name type="ordered locus">Sfum_2913</name>
</gene>
<keyword id="KW-0413">Isomerase</keyword>
<keyword id="KW-0460">Magnesium</keyword>
<keyword id="KW-0479">Metal-binding</keyword>
<keyword id="KW-0597">Phosphoprotein</keyword>
<keyword id="KW-1185">Reference proteome</keyword>